<sequence length="491" mass="54069">MANYFNTLNLRQQLAQLGKCRFMGRDEFADGASYLQGKKVVIVGCGAQGLNQGLNMRDSGLDISYALRKEAIAEKRASWRKATENGFKVGTYEELIPQADLVINLTPDKQHSDVVRTVQPLMKDGAALGYSHGFNIVEVGEQIRKDITVVMVAPKCPGTEVREEYKRGFGVPTLIAVHPENDPKGEGMAIAKAWAAATGGHRAGVLESSFVAEVKSDLMGEQTILCGMLQAGSLLCFDKLVEEGTDPAYAEKLIQFGWETITEALKQGGITLMMDRLSNPAKLRAYALSEQLKEIMAPLFQKHMDDIISGEFSSGMMADWANDDKKLLTWREETGKTAFETAPQYEGKIGEQEYFDKGVLMIAMVKAGVELAFETMVDSGIIEESAYYESLHELPLIANTIARKRLYEMNVVISDTAEYGNYLFSYACVPLLKPFMAELQPGDLGKAIPEGAVDNGQLRDVNEAIRSHAIEQVGKKLRGYMTDMKRIAVAG</sequence>
<reference key="1">
    <citation type="journal article" date="2008" name="J. Bacteriol.">
        <title>The complete genome sequence of Escherichia coli DH10B: insights into the biology of a laboratory workhorse.</title>
        <authorList>
            <person name="Durfee T."/>
            <person name="Nelson R."/>
            <person name="Baldwin S."/>
            <person name="Plunkett G. III"/>
            <person name="Burland V."/>
            <person name="Mau B."/>
            <person name="Petrosino J.F."/>
            <person name="Qin X."/>
            <person name="Muzny D.M."/>
            <person name="Ayele M."/>
            <person name="Gibbs R.A."/>
            <person name="Csorgo B."/>
            <person name="Posfai G."/>
            <person name="Weinstock G.M."/>
            <person name="Blattner F.R."/>
        </authorList>
    </citation>
    <scope>NUCLEOTIDE SEQUENCE [LARGE SCALE GENOMIC DNA]</scope>
    <source>
        <strain>K12 / DH10B</strain>
    </source>
</reference>
<comment type="function">
    <text evidence="1">Involved in the biosynthesis of branched-chain amino acids (BCAA). Catalyzes an alkyl-migration followed by a ketol-acid reduction of (S)-2-acetolactate (S2AL) to yield (R)-2,3-dihydroxy-isovalerate. In the isomerase reaction, S2AL is rearranged via a Mg-dependent methyl migration to produce 3-hydroxy-3-methyl-2-ketobutyrate (HMKB). In the reductase reaction, this 2-ketoacid undergoes a metal-dependent reduction by NADPH to yield (R)-2,3-dihydroxy-isovalerate.</text>
</comment>
<comment type="catalytic activity">
    <reaction evidence="1">
        <text>(2R)-2,3-dihydroxy-3-methylbutanoate + NADP(+) = (2S)-2-acetolactate + NADPH + H(+)</text>
        <dbReference type="Rhea" id="RHEA:22068"/>
        <dbReference type="ChEBI" id="CHEBI:15378"/>
        <dbReference type="ChEBI" id="CHEBI:49072"/>
        <dbReference type="ChEBI" id="CHEBI:57783"/>
        <dbReference type="ChEBI" id="CHEBI:58349"/>
        <dbReference type="ChEBI" id="CHEBI:58476"/>
        <dbReference type="EC" id="1.1.1.86"/>
    </reaction>
</comment>
<comment type="catalytic activity">
    <reaction evidence="1">
        <text>(2R,3R)-2,3-dihydroxy-3-methylpentanoate + NADP(+) = (S)-2-ethyl-2-hydroxy-3-oxobutanoate + NADPH + H(+)</text>
        <dbReference type="Rhea" id="RHEA:13493"/>
        <dbReference type="ChEBI" id="CHEBI:15378"/>
        <dbReference type="ChEBI" id="CHEBI:49256"/>
        <dbReference type="ChEBI" id="CHEBI:49258"/>
        <dbReference type="ChEBI" id="CHEBI:57783"/>
        <dbReference type="ChEBI" id="CHEBI:58349"/>
        <dbReference type="EC" id="1.1.1.86"/>
    </reaction>
</comment>
<comment type="cofactor">
    <cofactor evidence="1">
        <name>Mg(2+)</name>
        <dbReference type="ChEBI" id="CHEBI:18420"/>
    </cofactor>
    <text evidence="1">Binds 2 magnesium ions per subunit.</text>
</comment>
<comment type="pathway">
    <text evidence="1">Amino-acid biosynthesis; L-isoleucine biosynthesis; L-isoleucine from 2-oxobutanoate: step 2/4.</text>
</comment>
<comment type="pathway">
    <text evidence="1">Amino-acid biosynthesis; L-valine biosynthesis; L-valine from pyruvate: step 2/4.</text>
</comment>
<comment type="similarity">
    <text evidence="1">Belongs to the ketol-acid reductoisomerase family.</text>
</comment>
<accession>B1X9Z0</accession>
<feature type="chain" id="PRO_1000190954" description="Ketol-acid reductoisomerase (NADP(+))">
    <location>
        <begin position="1"/>
        <end position="491"/>
    </location>
</feature>
<feature type="domain" description="KARI N-terminal Rossmann" evidence="2">
    <location>
        <begin position="15"/>
        <end position="208"/>
    </location>
</feature>
<feature type="domain" description="KARI C-terminal knotted 1" evidence="3">
    <location>
        <begin position="209"/>
        <end position="344"/>
    </location>
</feature>
<feature type="domain" description="KARI C-terminal knotted 2" evidence="3">
    <location>
        <begin position="345"/>
        <end position="484"/>
    </location>
</feature>
<feature type="active site" evidence="1">
    <location>
        <position position="132"/>
    </location>
</feature>
<feature type="binding site" evidence="1">
    <location>
        <begin position="45"/>
        <end position="48"/>
    </location>
    <ligand>
        <name>NADP(+)</name>
        <dbReference type="ChEBI" id="CHEBI:58349"/>
    </ligand>
</feature>
<feature type="binding site" evidence="1">
    <location>
        <position position="68"/>
    </location>
    <ligand>
        <name>NADP(+)</name>
        <dbReference type="ChEBI" id="CHEBI:58349"/>
    </ligand>
</feature>
<feature type="binding site" evidence="1">
    <location>
        <position position="76"/>
    </location>
    <ligand>
        <name>NADP(+)</name>
        <dbReference type="ChEBI" id="CHEBI:58349"/>
    </ligand>
</feature>
<feature type="binding site" evidence="1">
    <location>
        <position position="78"/>
    </location>
    <ligand>
        <name>NADP(+)</name>
        <dbReference type="ChEBI" id="CHEBI:58349"/>
    </ligand>
</feature>
<feature type="binding site" evidence="1">
    <location>
        <begin position="108"/>
        <end position="110"/>
    </location>
    <ligand>
        <name>NADP(+)</name>
        <dbReference type="ChEBI" id="CHEBI:58349"/>
    </ligand>
</feature>
<feature type="binding site" evidence="1">
    <location>
        <position position="158"/>
    </location>
    <ligand>
        <name>NADP(+)</name>
        <dbReference type="ChEBI" id="CHEBI:58349"/>
    </ligand>
</feature>
<feature type="binding site" evidence="1">
    <location>
        <position position="217"/>
    </location>
    <ligand>
        <name>Mg(2+)</name>
        <dbReference type="ChEBI" id="CHEBI:18420"/>
        <label>1</label>
    </ligand>
</feature>
<feature type="binding site" evidence="1">
    <location>
        <position position="217"/>
    </location>
    <ligand>
        <name>Mg(2+)</name>
        <dbReference type="ChEBI" id="CHEBI:18420"/>
        <label>2</label>
    </ligand>
</feature>
<feature type="binding site" evidence="1">
    <location>
        <position position="221"/>
    </location>
    <ligand>
        <name>Mg(2+)</name>
        <dbReference type="ChEBI" id="CHEBI:18420"/>
        <label>1</label>
    </ligand>
</feature>
<feature type="binding site" evidence="1">
    <location>
        <position position="389"/>
    </location>
    <ligand>
        <name>Mg(2+)</name>
        <dbReference type="ChEBI" id="CHEBI:18420"/>
        <label>2</label>
    </ligand>
</feature>
<feature type="binding site" evidence="1">
    <location>
        <position position="393"/>
    </location>
    <ligand>
        <name>Mg(2+)</name>
        <dbReference type="ChEBI" id="CHEBI:18420"/>
        <label>2</label>
    </ligand>
</feature>
<feature type="binding site" evidence="1">
    <location>
        <position position="414"/>
    </location>
    <ligand>
        <name>substrate</name>
    </ligand>
</feature>
<evidence type="ECO:0000255" key="1">
    <source>
        <dbReference type="HAMAP-Rule" id="MF_00435"/>
    </source>
</evidence>
<evidence type="ECO:0000255" key="2">
    <source>
        <dbReference type="PROSITE-ProRule" id="PRU01197"/>
    </source>
</evidence>
<evidence type="ECO:0000255" key="3">
    <source>
        <dbReference type="PROSITE-ProRule" id="PRU01198"/>
    </source>
</evidence>
<name>ILVC_ECODH</name>
<organism>
    <name type="scientific">Escherichia coli (strain K12 / DH10B)</name>
    <dbReference type="NCBI Taxonomy" id="316385"/>
    <lineage>
        <taxon>Bacteria</taxon>
        <taxon>Pseudomonadati</taxon>
        <taxon>Pseudomonadota</taxon>
        <taxon>Gammaproteobacteria</taxon>
        <taxon>Enterobacterales</taxon>
        <taxon>Enterobacteriaceae</taxon>
        <taxon>Escherichia</taxon>
    </lineage>
</organism>
<protein>
    <recommendedName>
        <fullName evidence="1">Ketol-acid reductoisomerase (NADP(+))</fullName>
        <shortName evidence="1">KARI</shortName>
        <ecNumber evidence="1">1.1.1.86</ecNumber>
    </recommendedName>
    <alternativeName>
        <fullName evidence="1">Acetohydroxy-acid isomeroreductase</fullName>
        <shortName evidence="1">AHIR</shortName>
    </alternativeName>
    <alternativeName>
        <fullName evidence="1">Alpha-keto-beta-hydroxylacyl reductoisomerase</fullName>
    </alternativeName>
    <alternativeName>
        <fullName evidence="1">Ketol-acid reductoisomerase type 2</fullName>
    </alternativeName>
    <alternativeName>
        <fullName evidence="1">Ketol-acid reductoisomerase type II</fullName>
    </alternativeName>
</protein>
<keyword id="KW-0028">Amino-acid biosynthesis</keyword>
<keyword id="KW-0100">Branched-chain amino acid biosynthesis</keyword>
<keyword id="KW-0460">Magnesium</keyword>
<keyword id="KW-0479">Metal-binding</keyword>
<keyword id="KW-0521">NADP</keyword>
<keyword id="KW-0560">Oxidoreductase</keyword>
<keyword id="KW-0677">Repeat</keyword>
<gene>
    <name evidence="1" type="primary">ilvC</name>
    <name type="ordered locus">ECDH10B_3963</name>
</gene>
<dbReference type="EC" id="1.1.1.86" evidence="1"/>
<dbReference type="EMBL" id="CP000948">
    <property type="protein sequence ID" value="ACB04805.1"/>
    <property type="molecule type" value="Genomic_DNA"/>
</dbReference>
<dbReference type="RefSeq" id="WP_000024939.1">
    <property type="nucleotide sequence ID" value="NC_010473.1"/>
</dbReference>
<dbReference type="SMR" id="B1X9Z0"/>
<dbReference type="KEGG" id="ecd:ECDH10B_3963"/>
<dbReference type="HOGENOM" id="CLU_551905_0_0_6"/>
<dbReference type="UniPathway" id="UPA00047">
    <property type="reaction ID" value="UER00056"/>
</dbReference>
<dbReference type="UniPathway" id="UPA00049">
    <property type="reaction ID" value="UER00060"/>
</dbReference>
<dbReference type="GO" id="GO:0005829">
    <property type="term" value="C:cytosol"/>
    <property type="evidence" value="ECO:0007669"/>
    <property type="project" value="TreeGrafter"/>
</dbReference>
<dbReference type="GO" id="GO:0004455">
    <property type="term" value="F:ketol-acid reductoisomerase activity"/>
    <property type="evidence" value="ECO:0007669"/>
    <property type="project" value="UniProtKB-UniRule"/>
</dbReference>
<dbReference type="GO" id="GO:0000287">
    <property type="term" value="F:magnesium ion binding"/>
    <property type="evidence" value="ECO:0007669"/>
    <property type="project" value="UniProtKB-UniRule"/>
</dbReference>
<dbReference type="GO" id="GO:0009097">
    <property type="term" value="P:isoleucine biosynthetic process"/>
    <property type="evidence" value="ECO:0007669"/>
    <property type="project" value="UniProtKB-UniRule"/>
</dbReference>
<dbReference type="GO" id="GO:0009099">
    <property type="term" value="P:L-valine biosynthetic process"/>
    <property type="evidence" value="ECO:0007669"/>
    <property type="project" value="UniProtKB-UniRule"/>
</dbReference>
<dbReference type="FunFam" id="1.10.1040.10:FF:000007">
    <property type="entry name" value="Ketol-acid reductoisomerase (NADP(+))"/>
    <property type="match status" value="1"/>
</dbReference>
<dbReference type="FunFam" id="3.40.50.720:FF:000043">
    <property type="entry name" value="Ketol-acid reductoisomerase (NADP(+))"/>
    <property type="match status" value="1"/>
</dbReference>
<dbReference type="Gene3D" id="1.10.1040.10">
    <property type="entry name" value="N-(1-d-carboxylethyl)-l-norvaline Dehydrogenase, domain 2"/>
    <property type="match status" value="1"/>
</dbReference>
<dbReference type="Gene3D" id="3.40.50.720">
    <property type="entry name" value="NAD(P)-binding Rossmann-like Domain"/>
    <property type="match status" value="1"/>
</dbReference>
<dbReference type="HAMAP" id="MF_00435">
    <property type="entry name" value="IlvC"/>
    <property type="match status" value="1"/>
</dbReference>
<dbReference type="InterPro" id="IPR008927">
    <property type="entry name" value="6-PGluconate_DH-like_C_sf"/>
</dbReference>
<dbReference type="InterPro" id="IPR013328">
    <property type="entry name" value="6PGD_dom2"/>
</dbReference>
<dbReference type="InterPro" id="IPR013023">
    <property type="entry name" value="KARI"/>
</dbReference>
<dbReference type="InterPro" id="IPR000506">
    <property type="entry name" value="KARI_C"/>
</dbReference>
<dbReference type="InterPro" id="IPR013116">
    <property type="entry name" value="KARI_N"/>
</dbReference>
<dbReference type="InterPro" id="IPR036291">
    <property type="entry name" value="NAD(P)-bd_dom_sf"/>
</dbReference>
<dbReference type="NCBIfam" id="TIGR00465">
    <property type="entry name" value="ilvC"/>
    <property type="match status" value="1"/>
</dbReference>
<dbReference type="NCBIfam" id="NF003557">
    <property type="entry name" value="PRK05225.1"/>
    <property type="match status" value="1"/>
</dbReference>
<dbReference type="PANTHER" id="PTHR21371">
    <property type="entry name" value="KETOL-ACID REDUCTOISOMERASE, MITOCHONDRIAL"/>
    <property type="match status" value="1"/>
</dbReference>
<dbReference type="PANTHER" id="PTHR21371:SF1">
    <property type="entry name" value="KETOL-ACID REDUCTOISOMERASE, MITOCHONDRIAL"/>
    <property type="match status" value="1"/>
</dbReference>
<dbReference type="Pfam" id="PF01450">
    <property type="entry name" value="KARI_C"/>
    <property type="match status" value="2"/>
</dbReference>
<dbReference type="Pfam" id="PF07991">
    <property type="entry name" value="KARI_N"/>
    <property type="match status" value="1"/>
</dbReference>
<dbReference type="SUPFAM" id="SSF48179">
    <property type="entry name" value="6-phosphogluconate dehydrogenase C-terminal domain-like"/>
    <property type="match status" value="2"/>
</dbReference>
<dbReference type="SUPFAM" id="SSF51735">
    <property type="entry name" value="NAD(P)-binding Rossmann-fold domains"/>
    <property type="match status" value="1"/>
</dbReference>
<dbReference type="PROSITE" id="PS51851">
    <property type="entry name" value="KARI_C"/>
    <property type="match status" value="2"/>
</dbReference>
<dbReference type="PROSITE" id="PS51850">
    <property type="entry name" value="KARI_N"/>
    <property type="match status" value="1"/>
</dbReference>
<proteinExistence type="inferred from homology"/>